<organism>
    <name type="scientific">Clostridium botulinum (strain Loch Maree / Type A3)</name>
    <dbReference type="NCBI Taxonomy" id="498214"/>
    <lineage>
        <taxon>Bacteria</taxon>
        <taxon>Bacillati</taxon>
        <taxon>Bacillota</taxon>
        <taxon>Clostridia</taxon>
        <taxon>Eubacteriales</taxon>
        <taxon>Clostridiaceae</taxon>
        <taxon>Clostridium</taxon>
    </lineage>
</organism>
<keyword id="KW-0963">Cytoplasm</keyword>
<keyword id="KW-0342">GTP-binding</keyword>
<keyword id="KW-0396">Initiation factor</keyword>
<keyword id="KW-0547">Nucleotide-binding</keyword>
<keyword id="KW-0648">Protein biosynthesis</keyword>
<name>IF2_CLOBM</name>
<protein>
    <recommendedName>
        <fullName evidence="2">Translation initiation factor IF-2</fullName>
    </recommendedName>
</protein>
<feature type="chain" id="PRO_1000093776" description="Translation initiation factor IF-2">
    <location>
        <begin position="1"/>
        <end position="688"/>
    </location>
</feature>
<feature type="domain" description="tr-type G">
    <location>
        <begin position="187"/>
        <end position="354"/>
    </location>
</feature>
<feature type="region of interest" description="Disordered" evidence="3">
    <location>
        <begin position="53"/>
        <end position="100"/>
    </location>
</feature>
<feature type="region of interest" description="G1" evidence="1">
    <location>
        <begin position="196"/>
        <end position="203"/>
    </location>
</feature>
<feature type="region of interest" description="G2" evidence="1">
    <location>
        <begin position="221"/>
        <end position="225"/>
    </location>
</feature>
<feature type="region of interest" description="G3" evidence="1">
    <location>
        <begin position="242"/>
        <end position="245"/>
    </location>
</feature>
<feature type="region of interest" description="G4" evidence="1">
    <location>
        <begin position="296"/>
        <end position="299"/>
    </location>
</feature>
<feature type="region of interest" description="G5" evidence="1">
    <location>
        <begin position="332"/>
        <end position="334"/>
    </location>
</feature>
<feature type="compositionally biased region" description="Basic and acidic residues" evidence="3">
    <location>
        <begin position="53"/>
        <end position="62"/>
    </location>
</feature>
<feature type="compositionally biased region" description="Basic and acidic residues" evidence="3">
    <location>
        <begin position="86"/>
        <end position="95"/>
    </location>
</feature>
<feature type="binding site" evidence="2">
    <location>
        <begin position="196"/>
        <end position="203"/>
    </location>
    <ligand>
        <name>GTP</name>
        <dbReference type="ChEBI" id="CHEBI:37565"/>
    </ligand>
</feature>
<feature type="binding site" evidence="2">
    <location>
        <begin position="242"/>
        <end position="246"/>
    </location>
    <ligand>
        <name>GTP</name>
        <dbReference type="ChEBI" id="CHEBI:37565"/>
    </ligand>
</feature>
<feature type="binding site" evidence="2">
    <location>
        <begin position="296"/>
        <end position="299"/>
    </location>
    <ligand>
        <name>GTP</name>
        <dbReference type="ChEBI" id="CHEBI:37565"/>
    </ligand>
</feature>
<proteinExistence type="inferred from homology"/>
<reference key="1">
    <citation type="journal article" date="2007" name="PLoS ONE">
        <title>Analysis of the neurotoxin complex genes in Clostridium botulinum A1-A4 and B1 strains: BoNT/A3, /Ba4 and /B1 clusters are located within plasmids.</title>
        <authorList>
            <person name="Smith T.J."/>
            <person name="Hill K.K."/>
            <person name="Foley B.T."/>
            <person name="Detter J.C."/>
            <person name="Munk A.C."/>
            <person name="Bruce D.C."/>
            <person name="Doggett N.A."/>
            <person name="Smith L.A."/>
            <person name="Marks J.D."/>
            <person name="Xie G."/>
            <person name="Brettin T.S."/>
        </authorList>
    </citation>
    <scope>NUCLEOTIDE SEQUENCE [LARGE SCALE GENOMIC DNA]</scope>
    <source>
        <strain>Loch Maree / Type A3</strain>
    </source>
</reference>
<dbReference type="EMBL" id="CP000962">
    <property type="protein sequence ID" value="ACA54976.1"/>
    <property type="molecule type" value="Genomic_DNA"/>
</dbReference>
<dbReference type="RefSeq" id="WP_012343012.1">
    <property type="nucleotide sequence ID" value="NC_010520.1"/>
</dbReference>
<dbReference type="SMR" id="B1KWK7"/>
<dbReference type="KEGG" id="cbl:CLK_1794"/>
<dbReference type="HOGENOM" id="CLU_006301_5_1_9"/>
<dbReference type="GO" id="GO:0005829">
    <property type="term" value="C:cytosol"/>
    <property type="evidence" value="ECO:0007669"/>
    <property type="project" value="TreeGrafter"/>
</dbReference>
<dbReference type="GO" id="GO:0005525">
    <property type="term" value="F:GTP binding"/>
    <property type="evidence" value="ECO:0007669"/>
    <property type="project" value="UniProtKB-KW"/>
</dbReference>
<dbReference type="GO" id="GO:0003924">
    <property type="term" value="F:GTPase activity"/>
    <property type="evidence" value="ECO:0007669"/>
    <property type="project" value="UniProtKB-UniRule"/>
</dbReference>
<dbReference type="GO" id="GO:0003743">
    <property type="term" value="F:translation initiation factor activity"/>
    <property type="evidence" value="ECO:0007669"/>
    <property type="project" value="UniProtKB-UniRule"/>
</dbReference>
<dbReference type="CDD" id="cd01887">
    <property type="entry name" value="IF2_eIF5B"/>
    <property type="match status" value="1"/>
</dbReference>
<dbReference type="CDD" id="cd03702">
    <property type="entry name" value="IF2_mtIF2_II"/>
    <property type="match status" value="1"/>
</dbReference>
<dbReference type="CDD" id="cd03692">
    <property type="entry name" value="mtIF2_IVc"/>
    <property type="match status" value="1"/>
</dbReference>
<dbReference type="FunFam" id="2.40.30.10:FF:000007">
    <property type="entry name" value="Translation initiation factor IF-2"/>
    <property type="match status" value="1"/>
</dbReference>
<dbReference type="FunFam" id="2.40.30.10:FF:000008">
    <property type="entry name" value="Translation initiation factor IF-2"/>
    <property type="match status" value="1"/>
</dbReference>
<dbReference type="FunFam" id="3.40.50.10050:FF:000001">
    <property type="entry name" value="Translation initiation factor IF-2"/>
    <property type="match status" value="1"/>
</dbReference>
<dbReference type="FunFam" id="3.40.50.300:FF:000019">
    <property type="entry name" value="Translation initiation factor IF-2"/>
    <property type="match status" value="1"/>
</dbReference>
<dbReference type="Gene3D" id="1.10.10.2480">
    <property type="match status" value="1"/>
</dbReference>
<dbReference type="Gene3D" id="3.40.50.300">
    <property type="entry name" value="P-loop containing nucleotide triphosphate hydrolases"/>
    <property type="match status" value="1"/>
</dbReference>
<dbReference type="Gene3D" id="2.40.30.10">
    <property type="entry name" value="Translation factors"/>
    <property type="match status" value="2"/>
</dbReference>
<dbReference type="Gene3D" id="3.40.50.10050">
    <property type="entry name" value="Translation initiation factor IF- 2, domain 3"/>
    <property type="match status" value="1"/>
</dbReference>
<dbReference type="HAMAP" id="MF_00100_B">
    <property type="entry name" value="IF_2_B"/>
    <property type="match status" value="1"/>
</dbReference>
<dbReference type="InterPro" id="IPR053905">
    <property type="entry name" value="EF-G-like_DII"/>
</dbReference>
<dbReference type="InterPro" id="IPR044145">
    <property type="entry name" value="IF2_II"/>
</dbReference>
<dbReference type="InterPro" id="IPR006847">
    <property type="entry name" value="IF2_N"/>
</dbReference>
<dbReference type="InterPro" id="IPR027417">
    <property type="entry name" value="P-loop_NTPase"/>
</dbReference>
<dbReference type="InterPro" id="IPR005225">
    <property type="entry name" value="Small_GTP-bd"/>
</dbReference>
<dbReference type="InterPro" id="IPR000795">
    <property type="entry name" value="T_Tr_GTP-bd_dom"/>
</dbReference>
<dbReference type="InterPro" id="IPR000178">
    <property type="entry name" value="TF_IF2_bacterial-like"/>
</dbReference>
<dbReference type="InterPro" id="IPR015760">
    <property type="entry name" value="TIF_IF2"/>
</dbReference>
<dbReference type="InterPro" id="IPR023115">
    <property type="entry name" value="TIF_IF2_dom3"/>
</dbReference>
<dbReference type="InterPro" id="IPR036925">
    <property type="entry name" value="TIF_IF2_dom3_sf"/>
</dbReference>
<dbReference type="InterPro" id="IPR009000">
    <property type="entry name" value="Transl_B-barrel_sf"/>
</dbReference>
<dbReference type="NCBIfam" id="TIGR00487">
    <property type="entry name" value="IF-2"/>
    <property type="match status" value="1"/>
</dbReference>
<dbReference type="NCBIfam" id="TIGR00231">
    <property type="entry name" value="small_GTP"/>
    <property type="match status" value="1"/>
</dbReference>
<dbReference type="PANTHER" id="PTHR43381:SF5">
    <property type="entry name" value="TR-TYPE G DOMAIN-CONTAINING PROTEIN"/>
    <property type="match status" value="1"/>
</dbReference>
<dbReference type="PANTHER" id="PTHR43381">
    <property type="entry name" value="TRANSLATION INITIATION FACTOR IF-2-RELATED"/>
    <property type="match status" value="1"/>
</dbReference>
<dbReference type="Pfam" id="PF22042">
    <property type="entry name" value="EF-G_D2"/>
    <property type="match status" value="1"/>
</dbReference>
<dbReference type="Pfam" id="PF00009">
    <property type="entry name" value="GTP_EFTU"/>
    <property type="match status" value="1"/>
</dbReference>
<dbReference type="Pfam" id="PF11987">
    <property type="entry name" value="IF-2"/>
    <property type="match status" value="1"/>
</dbReference>
<dbReference type="Pfam" id="PF04760">
    <property type="entry name" value="IF2_N"/>
    <property type="match status" value="2"/>
</dbReference>
<dbReference type="SUPFAM" id="SSF52156">
    <property type="entry name" value="Initiation factor IF2/eIF5b, domain 3"/>
    <property type="match status" value="1"/>
</dbReference>
<dbReference type="SUPFAM" id="SSF52540">
    <property type="entry name" value="P-loop containing nucleoside triphosphate hydrolases"/>
    <property type="match status" value="1"/>
</dbReference>
<dbReference type="SUPFAM" id="SSF50447">
    <property type="entry name" value="Translation proteins"/>
    <property type="match status" value="2"/>
</dbReference>
<dbReference type="PROSITE" id="PS51722">
    <property type="entry name" value="G_TR_2"/>
    <property type="match status" value="1"/>
</dbReference>
<dbReference type="PROSITE" id="PS01176">
    <property type="entry name" value="IF2"/>
    <property type="match status" value="1"/>
</dbReference>
<gene>
    <name evidence="2" type="primary">infB</name>
    <name type="ordered locus">CLK_1794</name>
</gene>
<comment type="function">
    <text evidence="2">One of the essential components for the initiation of protein synthesis. Protects formylmethionyl-tRNA from spontaneous hydrolysis and promotes its binding to the 30S ribosomal subunits. Also involved in the hydrolysis of GTP during the formation of the 70S ribosomal complex.</text>
</comment>
<comment type="subcellular location">
    <subcellularLocation>
        <location evidence="2">Cytoplasm</location>
    </subcellularLocation>
</comment>
<comment type="similarity">
    <text evidence="2">Belongs to the TRAFAC class translation factor GTPase superfamily. Classic translation factor GTPase family. IF-2 subfamily.</text>
</comment>
<accession>B1KWK7</accession>
<sequence>MAKIRVYELAKELNISSKELITLLEEEFSVEVKNHMSAIEDEDANLIKELLSGKEKSEKTKEEDDEIETTAKNPIKESMNNKKSNKRDDKNEKVNTENAEDMGIITMTSDTITVKEISDKLEKSYAEVIKELMLMGVMASVNQEINFEMAEKLAAKFDMEILKEDEDEKEDLEDILKDNEEEEYLQKRSPIITVMGHVDHGKTSLLDAIRKSKVTSTEAGGITQHIGAYTVELNGEAITFLDTPGHAAFTAMRARGAQVTDIVILVVAADDGIMPQTQEAISHCKAANVPLIVAINKIDRPGANIDKVKQELTEYGLVAEDWGGDTICVPVSAHTKEGIDDLLEMILLSSEILELKANPNRKAKGTVVEAKLDKGRGPVATLLIQNGTLRVGDSIVVGSTYGRIRAMFNDKGRNIESAGPSTPVEILGLSEVPEAGDKFYQTKEEKTARGIADKRKEKIRDEYLQSTHKVSLEDLYNQIQEGTVKELGLIVKADVQGSVEALKQSLEKLSTEEVKVRVIHGGVGAINETDVTLATASNGIILGFNVRPDNNAIIASERDGVDIKTYRIIYDAIEDIKSAMVGMLEPEFKEVVIGTAEVRQVYKISSVGTIAGAYIQTGKLARNAGARVIRDGIVIFESELASLKRFKDDAKEVAQGYECGLSIEKFNDIKEGDIIECFIMEEIKKKTL</sequence>
<evidence type="ECO:0000250" key="1"/>
<evidence type="ECO:0000255" key="2">
    <source>
        <dbReference type="HAMAP-Rule" id="MF_00100"/>
    </source>
</evidence>
<evidence type="ECO:0000256" key="3">
    <source>
        <dbReference type="SAM" id="MobiDB-lite"/>
    </source>
</evidence>